<dbReference type="EC" id="7.1.1.-" evidence="1"/>
<dbReference type="EMBL" id="CP000890">
    <property type="protein sequence ID" value="ABX78206.1"/>
    <property type="molecule type" value="Genomic_DNA"/>
</dbReference>
<dbReference type="RefSeq" id="WP_012220660.1">
    <property type="nucleotide sequence ID" value="NC_010117.1"/>
</dbReference>
<dbReference type="SMR" id="A9N8W4"/>
<dbReference type="KEGG" id="cbs:COXBURSA331_A1609"/>
<dbReference type="HOGENOM" id="CLU_067218_5_1_6"/>
<dbReference type="GO" id="GO:0005886">
    <property type="term" value="C:plasma membrane"/>
    <property type="evidence" value="ECO:0007669"/>
    <property type="project" value="UniProtKB-SubCell"/>
</dbReference>
<dbReference type="GO" id="GO:0051539">
    <property type="term" value="F:4 iron, 4 sulfur cluster binding"/>
    <property type="evidence" value="ECO:0007669"/>
    <property type="project" value="UniProtKB-KW"/>
</dbReference>
<dbReference type="GO" id="GO:0005506">
    <property type="term" value="F:iron ion binding"/>
    <property type="evidence" value="ECO:0007669"/>
    <property type="project" value="UniProtKB-UniRule"/>
</dbReference>
<dbReference type="GO" id="GO:0050136">
    <property type="term" value="F:NADH:ubiquinone reductase (non-electrogenic) activity"/>
    <property type="evidence" value="ECO:0007669"/>
    <property type="project" value="UniProtKB-UniRule"/>
</dbReference>
<dbReference type="GO" id="GO:0048038">
    <property type="term" value="F:quinone binding"/>
    <property type="evidence" value="ECO:0007669"/>
    <property type="project" value="UniProtKB-KW"/>
</dbReference>
<dbReference type="GO" id="GO:0009060">
    <property type="term" value="P:aerobic respiration"/>
    <property type="evidence" value="ECO:0007669"/>
    <property type="project" value="TreeGrafter"/>
</dbReference>
<dbReference type="FunFam" id="3.30.70.3270:FF:000003">
    <property type="entry name" value="NADH-quinone oxidoreductase subunit I"/>
    <property type="match status" value="1"/>
</dbReference>
<dbReference type="Gene3D" id="3.30.70.3270">
    <property type="match status" value="1"/>
</dbReference>
<dbReference type="HAMAP" id="MF_01351">
    <property type="entry name" value="NDH1_NuoI"/>
    <property type="match status" value="1"/>
</dbReference>
<dbReference type="InterPro" id="IPR017896">
    <property type="entry name" value="4Fe4S_Fe-S-bd"/>
</dbReference>
<dbReference type="InterPro" id="IPR017900">
    <property type="entry name" value="4Fe4S_Fe_S_CS"/>
</dbReference>
<dbReference type="InterPro" id="IPR010226">
    <property type="entry name" value="NADH_quinone_OxRdtase_chainI"/>
</dbReference>
<dbReference type="NCBIfam" id="TIGR01971">
    <property type="entry name" value="NuoI"/>
    <property type="match status" value="1"/>
</dbReference>
<dbReference type="NCBIfam" id="NF004538">
    <property type="entry name" value="PRK05888.1-4"/>
    <property type="match status" value="1"/>
</dbReference>
<dbReference type="NCBIfam" id="NF004539">
    <property type="entry name" value="PRK05888.1-5"/>
    <property type="match status" value="1"/>
</dbReference>
<dbReference type="PANTHER" id="PTHR10849:SF20">
    <property type="entry name" value="NADH DEHYDROGENASE [UBIQUINONE] IRON-SULFUR PROTEIN 8, MITOCHONDRIAL"/>
    <property type="match status" value="1"/>
</dbReference>
<dbReference type="PANTHER" id="PTHR10849">
    <property type="entry name" value="NADH DEHYDROGENASE UBIQUINONE IRON-SULFUR PROTEIN 8, MITOCHONDRIAL"/>
    <property type="match status" value="1"/>
</dbReference>
<dbReference type="Pfam" id="PF12838">
    <property type="entry name" value="Fer4_7"/>
    <property type="match status" value="1"/>
</dbReference>
<dbReference type="SUPFAM" id="SSF46548">
    <property type="entry name" value="alpha-helical ferredoxin"/>
    <property type="match status" value="1"/>
</dbReference>
<dbReference type="PROSITE" id="PS00198">
    <property type="entry name" value="4FE4S_FER_1"/>
    <property type="match status" value="2"/>
</dbReference>
<dbReference type="PROSITE" id="PS51379">
    <property type="entry name" value="4FE4S_FER_2"/>
    <property type="match status" value="2"/>
</dbReference>
<gene>
    <name evidence="1" type="primary">nuoI</name>
    <name type="ordered locus">COXBURSA331_A1609</name>
</gene>
<comment type="function">
    <text evidence="1">NDH-1 shuttles electrons from NADH, via FMN and iron-sulfur (Fe-S) centers, to quinones in the respiratory chain. The immediate electron acceptor for the enzyme in this species is believed to be ubiquinone. Couples the redox reaction to proton translocation (for every two electrons transferred, four hydrogen ions are translocated across the cytoplasmic membrane), and thus conserves the redox energy in a proton gradient.</text>
</comment>
<comment type="catalytic activity">
    <reaction evidence="1">
        <text>a quinone + NADH + 5 H(+)(in) = a quinol + NAD(+) + 4 H(+)(out)</text>
        <dbReference type="Rhea" id="RHEA:57888"/>
        <dbReference type="ChEBI" id="CHEBI:15378"/>
        <dbReference type="ChEBI" id="CHEBI:24646"/>
        <dbReference type="ChEBI" id="CHEBI:57540"/>
        <dbReference type="ChEBI" id="CHEBI:57945"/>
        <dbReference type="ChEBI" id="CHEBI:132124"/>
    </reaction>
</comment>
<comment type="cofactor">
    <cofactor evidence="1">
        <name>[4Fe-4S] cluster</name>
        <dbReference type="ChEBI" id="CHEBI:49883"/>
    </cofactor>
    <text evidence="1">Binds 2 [4Fe-4S] clusters per subunit.</text>
</comment>
<comment type="subunit">
    <text evidence="1">NDH-1 is composed of 14 different subunits. Subunits NuoA, H, J, K, L, M, N constitute the membrane sector of the complex.</text>
</comment>
<comment type="subcellular location">
    <subcellularLocation>
        <location evidence="1">Cell inner membrane</location>
        <topology evidence="1">Peripheral membrane protein</topology>
    </subcellularLocation>
</comment>
<comment type="similarity">
    <text evidence="1">Belongs to the complex I 23 kDa subunit family.</text>
</comment>
<reference key="1">
    <citation type="submission" date="2007-11" db="EMBL/GenBank/DDBJ databases">
        <title>Genome sequencing of phylogenetically and phenotypically diverse Coxiella burnetii isolates.</title>
        <authorList>
            <person name="Seshadri R."/>
            <person name="Samuel J.E."/>
        </authorList>
    </citation>
    <scope>NUCLEOTIDE SEQUENCE [LARGE SCALE GENOMIC DNA]</scope>
    <source>
        <strain>RSA 331 / Henzerling II</strain>
    </source>
</reference>
<evidence type="ECO:0000255" key="1">
    <source>
        <dbReference type="HAMAP-Rule" id="MF_01351"/>
    </source>
</evidence>
<accession>A9N8W4</accession>
<sequence length="163" mass="18997">MRRLKQIIKSFTLWELLKGLSLTLRYFYRKKVTIHYPDEEVPSSFRFRGMLALRRYPNGEERCIACKLCEAVCPACAITIEAGPREADGSRRTTLYDIDAFKCINCGFCEEACPVDAIVLTPEMHYSIKDRGENILTKEKLLMIGDRYEEQIARDRAKDKKYR</sequence>
<organism>
    <name type="scientific">Coxiella burnetii (strain RSA 331 / Henzerling II)</name>
    <dbReference type="NCBI Taxonomy" id="360115"/>
    <lineage>
        <taxon>Bacteria</taxon>
        <taxon>Pseudomonadati</taxon>
        <taxon>Pseudomonadota</taxon>
        <taxon>Gammaproteobacteria</taxon>
        <taxon>Legionellales</taxon>
        <taxon>Coxiellaceae</taxon>
        <taxon>Coxiella</taxon>
    </lineage>
</organism>
<keyword id="KW-0004">4Fe-4S</keyword>
<keyword id="KW-0997">Cell inner membrane</keyword>
<keyword id="KW-1003">Cell membrane</keyword>
<keyword id="KW-0408">Iron</keyword>
<keyword id="KW-0411">Iron-sulfur</keyword>
<keyword id="KW-0472">Membrane</keyword>
<keyword id="KW-0479">Metal-binding</keyword>
<keyword id="KW-0520">NAD</keyword>
<keyword id="KW-0874">Quinone</keyword>
<keyword id="KW-0677">Repeat</keyword>
<keyword id="KW-1278">Translocase</keyword>
<keyword id="KW-0830">Ubiquinone</keyword>
<protein>
    <recommendedName>
        <fullName evidence="1">NADH-quinone oxidoreductase subunit I</fullName>
        <ecNumber evidence="1">7.1.1.-</ecNumber>
    </recommendedName>
    <alternativeName>
        <fullName evidence="1">NADH dehydrogenase I subunit I</fullName>
    </alternativeName>
    <alternativeName>
        <fullName evidence="1">NDH-1 subunit I</fullName>
    </alternativeName>
</protein>
<proteinExistence type="inferred from homology"/>
<name>NUOI_COXBR</name>
<feature type="chain" id="PRO_1000086955" description="NADH-quinone oxidoreductase subunit I">
    <location>
        <begin position="1"/>
        <end position="163"/>
    </location>
</feature>
<feature type="domain" description="4Fe-4S ferredoxin-type 1" evidence="1">
    <location>
        <begin position="53"/>
        <end position="83"/>
    </location>
</feature>
<feature type="domain" description="4Fe-4S ferredoxin-type 2" evidence="1">
    <location>
        <begin position="94"/>
        <end position="123"/>
    </location>
</feature>
<feature type="binding site" evidence="1">
    <location>
        <position position="63"/>
    </location>
    <ligand>
        <name>[4Fe-4S] cluster</name>
        <dbReference type="ChEBI" id="CHEBI:49883"/>
        <label>1</label>
    </ligand>
</feature>
<feature type="binding site" evidence="1">
    <location>
        <position position="66"/>
    </location>
    <ligand>
        <name>[4Fe-4S] cluster</name>
        <dbReference type="ChEBI" id="CHEBI:49883"/>
        <label>1</label>
    </ligand>
</feature>
<feature type="binding site" evidence="1">
    <location>
        <position position="69"/>
    </location>
    <ligand>
        <name>[4Fe-4S] cluster</name>
        <dbReference type="ChEBI" id="CHEBI:49883"/>
        <label>1</label>
    </ligand>
</feature>
<feature type="binding site" evidence="1">
    <location>
        <position position="73"/>
    </location>
    <ligand>
        <name>[4Fe-4S] cluster</name>
        <dbReference type="ChEBI" id="CHEBI:49883"/>
        <label>2</label>
    </ligand>
</feature>
<feature type="binding site" evidence="1">
    <location>
        <position position="103"/>
    </location>
    <ligand>
        <name>[4Fe-4S] cluster</name>
        <dbReference type="ChEBI" id="CHEBI:49883"/>
        <label>2</label>
    </ligand>
</feature>
<feature type="binding site" evidence="1">
    <location>
        <position position="106"/>
    </location>
    <ligand>
        <name>[4Fe-4S] cluster</name>
        <dbReference type="ChEBI" id="CHEBI:49883"/>
        <label>2</label>
    </ligand>
</feature>
<feature type="binding site" evidence="1">
    <location>
        <position position="109"/>
    </location>
    <ligand>
        <name>[4Fe-4S] cluster</name>
        <dbReference type="ChEBI" id="CHEBI:49883"/>
        <label>2</label>
    </ligand>
</feature>
<feature type="binding site" evidence="1">
    <location>
        <position position="113"/>
    </location>
    <ligand>
        <name>[4Fe-4S] cluster</name>
        <dbReference type="ChEBI" id="CHEBI:49883"/>
        <label>1</label>
    </ligand>
</feature>